<evidence type="ECO:0000255" key="1">
    <source>
        <dbReference type="PROSITE-ProRule" id="PRU00691"/>
    </source>
</evidence>
<evidence type="ECO:0000269" key="2">
    <source>
    </source>
</evidence>
<evidence type="ECO:0000269" key="3">
    <source>
    </source>
</evidence>
<evidence type="ECO:0000269" key="4">
    <source>
    </source>
</evidence>
<evidence type="ECO:0000269" key="5">
    <source>
    </source>
</evidence>
<evidence type="ECO:0000305" key="6"/>
<evidence type="ECO:0007829" key="7">
    <source>
        <dbReference type="PDB" id="1EEJ"/>
    </source>
</evidence>
<feature type="signal peptide" evidence="5">
    <location>
        <begin position="1"/>
        <end position="20"/>
    </location>
</feature>
<feature type="chain" id="PRO_0000034273" description="Thiol:disulfide interchange protein DsbC">
    <location>
        <begin position="21"/>
        <end position="236"/>
    </location>
</feature>
<feature type="domain" description="Thioredoxin" evidence="1">
    <location>
        <begin position="36"/>
        <end position="231"/>
    </location>
</feature>
<feature type="disulfide bond" description="Redox-active" evidence="1 2">
    <location>
        <begin position="118"/>
        <end position="121"/>
    </location>
</feature>
<feature type="disulfide bond" evidence="2">
    <location>
        <begin position="161"/>
        <end position="183"/>
    </location>
</feature>
<feature type="mutagenesis site" description="Loss of activity." evidence="4">
    <original>C</original>
    <variation>T</variation>
    <variation>A</variation>
    <location>
        <position position="118"/>
    </location>
</feature>
<feature type="mutagenesis site" description="Partial loss of activity." evidence="4">
    <original>C</original>
    <variation>A</variation>
    <location>
        <position position="121"/>
    </location>
</feature>
<feature type="mutagenesis site" description="Loss of activity." evidence="4">
    <original>C</original>
    <variation>V</variation>
    <location>
        <position position="121"/>
    </location>
</feature>
<feature type="mutagenesis site" description="Destabilization of protein." evidence="4">
    <original>C</original>
    <variation>S</variation>
    <location>
        <position position="161"/>
    </location>
</feature>
<feature type="mutagenesis site" description="Destabilization of protein." evidence="4">
    <original>C</original>
    <variation>L</variation>
    <location>
        <position position="183"/>
    </location>
</feature>
<feature type="sequence conflict" description="In Ref. 1; AAA62788." evidence="6" ref="1">
    <location>
        <position position="219"/>
    </location>
</feature>
<feature type="helix" evidence="7">
    <location>
        <begin position="22"/>
        <end position="31"/>
    </location>
</feature>
<feature type="strand" evidence="7">
    <location>
        <begin position="36"/>
        <end position="41"/>
    </location>
</feature>
<feature type="strand" evidence="7">
    <location>
        <begin position="47"/>
        <end position="52"/>
    </location>
</feature>
<feature type="strand" evidence="7">
    <location>
        <begin position="55"/>
        <end position="60"/>
    </location>
</feature>
<feature type="strand" evidence="7">
    <location>
        <begin position="65"/>
        <end position="69"/>
    </location>
</feature>
<feature type="strand" evidence="7">
    <location>
        <begin position="71"/>
        <end position="73"/>
    </location>
</feature>
<feature type="strand" evidence="7">
    <location>
        <begin position="75"/>
        <end position="78"/>
    </location>
</feature>
<feature type="helix" evidence="7">
    <location>
        <begin position="82"/>
        <end position="92"/>
    </location>
</feature>
<feature type="helix" evidence="7">
    <location>
        <begin position="93"/>
        <end position="97"/>
    </location>
</feature>
<feature type="strand" evidence="7">
    <location>
        <begin position="98"/>
        <end position="101"/>
    </location>
</feature>
<feature type="strand" evidence="7">
    <location>
        <begin position="108"/>
        <end position="114"/>
    </location>
</feature>
<feature type="helix" evidence="7">
    <location>
        <begin position="119"/>
        <end position="125"/>
    </location>
</feature>
<feature type="helix" evidence="7">
    <location>
        <begin position="128"/>
        <end position="133"/>
    </location>
</feature>
<feature type="strand" evidence="7">
    <location>
        <begin position="136"/>
        <end position="142"/>
    </location>
</feature>
<feature type="strand" evidence="7">
    <location>
        <begin position="148"/>
        <end position="150"/>
    </location>
</feature>
<feature type="helix" evidence="7">
    <location>
        <begin position="151"/>
        <end position="160"/>
    </location>
</feature>
<feature type="strand" evidence="7">
    <location>
        <begin position="162"/>
        <end position="164"/>
    </location>
</feature>
<feature type="helix" evidence="7">
    <location>
        <begin position="165"/>
        <end position="173"/>
    </location>
</feature>
<feature type="helix" evidence="7">
    <location>
        <begin position="187"/>
        <end position="197"/>
    </location>
</feature>
<feature type="strand" evidence="7">
    <location>
        <begin position="201"/>
        <end position="206"/>
    </location>
</feature>
<feature type="strand" evidence="7">
    <location>
        <begin position="212"/>
        <end position="215"/>
    </location>
</feature>
<feature type="helix" evidence="7">
    <location>
        <begin position="219"/>
        <end position="234"/>
    </location>
</feature>
<organism>
    <name type="scientific">Escherichia coli (strain K12)</name>
    <dbReference type="NCBI Taxonomy" id="83333"/>
    <lineage>
        <taxon>Bacteria</taxon>
        <taxon>Pseudomonadati</taxon>
        <taxon>Pseudomonadota</taxon>
        <taxon>Gammaproteobacteria</taxon>
        <taxon>Enterobacterales</taxon>
        <taxon>Enterobacteriaceae</taxon>
        <taxon>Escherichia</taxon>
    </lineage>
</organism>
<comment type="function">
    <text evidence="3">Acts as a disulfide isomerase, interacting with incorrectly folded proteins to correct non-native disulfide bonds. DsbG and DsbC are part of a periplasmic reducing system that controls the level of cysteine sulfenylation, and provides reducing equivalents to rescue oxidatively damaged secreted proteins. Acts by transferring its disulfide bond to other proteins and is reduced in the process. DsbC is reoxidized by DsbD.</text>
</comment>
<comment type="subunit">
    <text>Homodimer.</text>
</comment>
<comment type="subcellular location">
    <subcellularLocation>
        <location evidence="4">Periplasm</location>
    </subcellularLocation>
</comment>
<comment type="similarity">
    <text evidence="6">Belongs to the thioredoxin family. DsbC subfamily.</text>
</comment>
<protein>
    <recommendedName>
        <fullName>Thiol:disulfide interchange protein DsbC</fullName>
    </recommendedName>
</protein>
<dbReference type="EMBL" id="M54884">
    <property type="protein sequence ID" value="AAA62788.1"/>
    <property type="molecule type" value="Genomic_DNA"/>
</dbReference>
<dbReference type="EMBL" id="U28375">
    <property type="protein sequence ID" value="AAA83074.1"/>
    <property type="molecule type" value="Genomic_DNA"/>
</dbReference>
<dbReference type="EMBL" id="U00096">
    <property type="protein sequence ID" value="AAC75931.1"/>
    <property type="molecule type" value="Genomic_DNA"/>
</dbReference>
<dbReference type="EMBL" id="AP009048">
    <property type="protein sequence ID" value="BAE76958.1"/>
    <property type="molecule type" value="Genomic_DNA"/>
</dbReference>
<dbReference type="PIR" id="E65073">
    <property type="entry name" value="E65073"/>
</dbReference>
<dbReference type="RefSeq" id="NP_417369.1">
    <property type="nucleotide sequence ID" value="NC_000913.3"/>
</dbReference>
<dbReference type="RefSeq" id="WP_000715214.1">
    <property type="nucleotide sequence ID" value="NZ_STEB01000001.1"/>
</dbReference>
<dbReference type="PDB" id="1EEJ">
    <property type="method" value="X-ray"/>
    <property type="resolution" value="1.90 A"/>
    <property type="chains" value="A/B=21-236"/>
</dbReference>
<dbReference type="PDB" id="1G0T">
    <property type="method" value="X-ray"/>
    <property type="resolution" value="2.60 A"/>
    <property type="chains" value="A/B=21-236"/>
</dbReference>
<dbReference type="PDB" id="1JZD">
    <property type="method" value="X-ray"/>
    <property type="resolution" value="2.30 A"/>
    <property type="chains" value="A/B=20-236"/>
</dbReference>
<dbReference type="PDB" id="1JZO">
    <property type="method" value="X-ray"/>
    <property type="resolution" value="1.92 A"/>
    <property type="chains" value="A/B=21-236"/>
</dbReference>
<dbReference type="PDB" id="1TJD">
    <property type="method" value="X-ray"/>
    <property type="resolution" value="2.50 A"/>
    <property type="chains" value="A=21-236"/>
</dbReference>
<dbReference type="PDB" id="2IYJ">
    <property type="method" value="X-ray"/>
    <property type="resolution" value="2.00 A"/>
    <property type="chains" value="A/B=19-91"/>
</dbReference>
<dbReference type="PDBsum" id="1EEJ"/>
<dbReference type="PDBsum" id="1G0T"/>
<dbReference type="PDBsum" id="1JZD"/>
<dbReference type="PDBsum" id="1JZO"/>
<dbReference type="PDBsum" id="1TJD"/>
<dbReference type="PDBsum" id="2IYJ"/>
<dbReference type="SMR" id="P0AEG6"/>
<dbReference type="BioGRID" id="4261304">
    <property type="interactions" value="508"/>
</dbReference>
<dbReference type="DIP" id="DIP-35818N"/>
<dbReference type="FunCoup" id="P0AEG6">
    <property type="interactions" value="254"/>
</dbReference>
<dbReference type="IntAct" id="P0AEG6">
    <property type="interactions" value="9"/>
</dbReference>
<dbReference type="STRING" id="511145.b2893"/>
<dbReference type="DrugBank" id="DB03814">
    <property type="generic name" value="2-(N-morpholino)ethanesulfonic acid"/>
</dbReference>
<dbReference type="jPOST" id="P0AEG6"/>
<dbReference type="PaxDb" id="511145-b2893"/>
<dbReference type="EnsemblBacteria" id="AAC75931">
    <property type="protein sequence ID" value="AAC75931"/>
    <property type="gene ID" value="b2893"/>
</dbReference>
<dbReference type="GeneID" id="75205270"/>
<dbReference type="GeneID" id="947363"/>
<dbReference type="KEGG" id="ecj:JW2861"/>
<dbReference type="KEGG" id="eco:b2893"/>
<dbReference type="KEGG" id="ecoc:C3026_15865"/>
<dbReference type="PATRIC" id="fig|1411691.4.peg.3840"/>
<dbReference type="EchoBASE" id="EB1063"/>
<dbReference type="eggNOG" id="COG1651">
    <property type="taxonomic scope" value="Bacteria"/>
</dbReference>
<dbReference type="HOGENOM" id="CLU_083593_0_0_6"/>
<dbReference type="InParanoid" id="P0AEG6"/>
<dbReference type="OMA" id="QMIVYKA"/>
<dbReference type="OrthoDB" id="12976at2"/>
<dbReference type="PhylomeDB" id="P0AEG6"/>
<dbReference type="BioCyc" id="EcoCyc:DSBC-MONOMER"/>
<dbReference type="BioCyc" id="MetaCyc:DSBC-MONOMER"/>
<dbReference type="EvolutionaryTrace" id="P0AEG6"/>
<dbReference type="PRO" id="PR:P0AEG6"/>
<dbReference type="Proteomes" id="UP000000625">
    <property type="component" value="Chromosome"/>
</dbReference>
<dbReference type="GO" id="GO:0030288">
    <property type="term" value="C:outer membrane-bounded periplasmic space"/>
    <property type="evidence" value="ECO:0000314"/>
    <property type="project" value="EcoCyc"/>
</dbReference>
<dbReference type="GO" id="GO:0042597">
    <property type="term" value="C:periplasmic space"/>
    <property type="evidence" value="ECO:0000314"/>
    <property type="project" value="EcoliWiki"/>
</dbReference>
<dbReference type="GO" id="GO:0003756">
    <property type="term" value="F:protein disulfide isomerase activity"/>
    <property type="evidence" value="ECO:0000314"/>
    <property type="project" value="EcoCyc"/>
</dbReference>
<dbReference type="GO" id="GO:0042803">
    <property type="term" value="F:protein homodimerization activity"/>
    <property type="evidence" value="ECO:0000314"/>
    <property type="project" value="EcoCyc"/>
</dbReference>
<dbReference type="GO" id="GO:0015035">
    <property type="term" value="F:protein-disulfide reductase activity"/>
    <property type="evidence" value="ECO:0000315"/>
    <property type="project" value="UniProtKB"/>
</dbReference>
<dbReference type="GO" id="GO:0061077">
    <property type="term" value="P:chaperone-mediated protein folding"/>
    <property type="evidence" value="ECO:0000314"/>
    <property type="project" value="EcoCyc"/>
</dbReference>
<dbReference type="GO" id="GO:0046688">
    <property type="term" value="P:response to copper ion"/>
    <property type="evidence" value="ECO:0000315"/>
    <property type="project" value="EcoCyc"/>
</dbReference>
<dbReference type="CDD" id="cd03020">
    <property type="entry name" value="DsbA_DsbC_DsbG"/>
    <property type="match status" value="1"/>
</dbReference>
<dbReference type="FunFam" id="3.40.30.10:FF:000083">
    <property type="entry name" value="Thiol:disulfide interchange protein"/>
    <property type="match status" value="1"/>
</dbReference>
<dbReference type="Gene3D" id="3.10.450.70">
    <property type="entry name" value="Disulphide bond isomerase, DsbC/G, N-terminal"/>
    <property type="match status" value="1"/>
</dbReference>
<dbReference type="Gene3D" id="3.40.30.10">
    <property type="entry name" value="Glutaredoxin"/>
    <property type="match status" value="1"/>
</dbReference>
<dbReference type="InterPro" id="IPR033954">
    <property type="entry name" value="DiS-bond_Isoase_DsbC/G"/>
</dbReference>
<dbReference type="InterPro" id="IPR018950">
    <property type="entry name" value="DiS-bond_isomerase_DsbC/G_N"/>
</dbReference>
<dbReference type="InterPro" id="IPR009094">
    <property type="entry name" value="DiS-bond_isomerase_DsbC/G_N_sf"/>
</dbReference>
<dbReference type="InterPro" id="IPR051470">
    <property type="entry name" value="Thiol:disulfide_interchange"/>
</dbReference>
<dbReference type="InterPro" id="IPR012336">
    <property type="entry name" value="Thioredoxin-like_fold"/>
</dbReference>
<dbReference type="InterPro" id="IPR036249">
    <property type="entry name" value="Thioredoxin-like_sf"/>
</dbReference>
<dbReference type="InterPro" id="IPR017937">
    <property type="entry name" value="Thioredoxin_CS"/>
</dbReference>
<dbReference type="InterPro" id="IPR013766">
    <property type="entry name" value="Thioredoxin_domain"/>
</dbReference>
<dbReference type="NCBIfam" id="NF008129">
    <property type="entry name" value="PRK10877.1"/>
    <property type="match status" value="1"/>
</dbReference>
<dbReference type="PANTHER" id="PTHR35272:SF3">
    <property type="entry name" value="THIOL:DISULFIDE INTERCHANGE PROTEIN DSBC"/>
    <property type="match status" value="1"/>
</dbReference>
<dbReference type="PANTHER" id="PTHR35272">
    <property type="entry name" value="THIOL:DISULFIDE INTERCHANGE PROTEIN DSBC-RELATED"/>
    <property type="match status" value="1"/>
</dbReference>
<dbReference type="Pfam" id="PF10411">
    <property type="entry name" value="DsbC_N"/>
    <property type="match status" value="1"/>
</dbReference>
<dbReference type="Pfam" id="PF13098">
    <property type="entry name" value="Thioredoxin_2"/>
    <property type="match status" value="1"/>
</dbReference>
<dbReference type="SUPFAM" id="SSF54423">
    <property type="entry name" value="DsbC/DsbG N-terminal domain-like"/>
    <property type="match status" value="1"/>
</dbReference>
<dbReference type="SUPFAM" id="SSF52833">
    <property type="entry name" value="Thioredoxin-like"/>
    <property type="match status" value="1"/>
</dbReference>
<dbReference type="PROSITE" id="PS00194">
    <property type="entry name" value="THIOREDOXIN_1"/>
    <property type="match status" value="1"/>
</dbReference>
<dbReference type="PROSITE" id="PS51352">
    <property type="entry name" value="THIOREDOXIN_2"/>
    <property type="match status" value="1"/>
</dbReference>
<keyword id="KW-0002">3D-structure</keyword>
<keyword id="KW-0903">Direct protein sequencing</keyword>
<keyword id="KW-1015">Disulfide bond</keyword>
<keyword id="KW-0574">Periplasm</keyword>
<keyword id="KW-0676">Redox-active center</keyword>
<keyword id="KW-1185">Reference proteome</keyword>
<keyword id="KW-0732">Signal</keyword>
<sequence>MKKGFMLFTLLAAFSGFAQADDAAIQQTLAKMGIKSSDIQPAPVAGMKTVLTNSGVLYITDDGKHIIQGPMYDVSGTAPVNVTNKMLLKQLNALEKEMIVYKAPQEKHVITVFTDITCGYCHKLHEQMADYNALGITVRYLAFPRQGLDSDAEKEMKAIWCAKDKNKAFDDVMAGKSVAPASCDVDIADHYALGVQLGVSGTPAVVLSNGTLVPGYQPPKEMKEFLDEHQKMTSGK</sequence>
<gene>
    <name type="primary">dsbC</name>
    <name type="synonym">xprA</name>
    <name type="ordered locus">b2893</name>
    <name type="ordered locus">JW2861</name>
</gene>
<proteinExistence type="evidence at protein level"/>
<accession>P0AEG6</accession>
<accession>P21892</accession>
<accession>Q2M9U8</accession>
<name>DSBC_ECOLI</name>
<reference key="1">
    <citation type="journal article" date="1991" name="J. Bacteriol.">
        <title>Nucleotide sequence of the Escherichia coli recJ chromosomal region and construction of recJ-overexpression plasmids.</title>
        <authorList>
            <person name="Lovett S.T."/>
            <person name="Kolodner R.D."/>
        </authorList>
    </citation>
    <scope>NUCLEOTIDE SEQUENCE [GENOMIC DNA]</scope>
    <source>
        <strain>K12</strain>
    </source>
</reference>
<reference key="2">
    <citation type="journal article" date="1997" name="Science">
        <title>The complete genome sequence of Escherichia coli K-12.</title>
        <authorList>
            <person name="Blattner F.R."/>
            <person name="Plunkett G. III"/>
            <person name="Bloch C.A."/>
            <person name="Perna N.T."/>
            <person name="Burland V."/>
            <person name="Riley M."/>
            <person name="Collado-Vides J."/>
            <person name="Glasner J.D."/>
            <person name="Rode C.K."/>
            <person name="Mayhew G.F."/>
            <person name="Gregor J."/>
            <person name="Davis N.W."/>
            <person name="Kirkpatrick H.A."/>
            <person name="Goeden M.A."/>
            <person name="Rose D.J."/>
            <person name="Mau B."/>
            <person name="Shao Y."/>
        </authorList>
    </citation>
    <scope>NUCLEOTIDE SEQUENCE [LARGE SCALE GENOMIC DNA]</scope>
    <source>
        <strain>K12 / MG1655 / ATCC 47076</strain>
    </source>
</reference>
<reference key="3">
    <citation type="journal article" date="2006" name="Mol. Syst. Biol.">
        <title>Highly accurate genome sequences of Escherichia coli K-12 strains MG1655 and W3110.</title>
        <authorList>
            <person name="Hayashi K."/>
            <person name="Morooka N."/>
            <person name="Yamamoto Y."/>
            <person name="Fujita K."/>
            <person name="Isono K."/>
            <person name="Choi S."/>
            <person name="Ohtsubo E."/>
            <person name="Baba T."/>
            <person name="Wanner B.L."/>
            <person name="Mori H."/>
            <person name="Horiuchi T."/>
        </authorList>
    </citation>
    <scope>NUCLEOTIDE SEQUENCE [LARGE SCALE GENOMIC DNA]</scope>
    <source>
        <strain>K12 / W3110 / ATCC 27325 / DSM 5911</strain>
    </source>
</reference>
<reference key="4">
    <citation type="journal article" date="1997" name="Electrophoresis">
        <title>Comparing the predicted and observed properties of proteins encoded in the genome of Escherichia coli K-12.</title>
        <authorList>
            <person name="Link A.J."/>
            <person name="Robison K."/>
            <person name="Church G.M."/>
        </authorList>
    </citation>
    <scope>PROTEIN SEQUENCE OF 21-32</scope>
    <source>
        <strain>K12 / EMG2</strain>
    </source>
</reference>
<reference key="5">
    <citation type="journal article" date="1994" name="EMBO J.">
        <title>The Escherichia coli dsbC (xprA) gene encodes a periplasmic protein involved in disulfide bond formation.</title>
        <authorList>
            <person name="Missiakas D."/>
            <person name="Georgopoulos C."/>
            <person name="Raina S."/>
        </authorList>
    </citation>
    <scope>CHARACTERIZATION</scope>
    <scope>SUBCELLULAR LOCATION</scope>
    <scope>MUTAGENESIS OF CYS-118; CYS-121; CYS-161 AND CYS-183</scope>
</reference>
<reference key="6">
    <citation type="journal article" date="1995" name="Biochemistry">
        <title>Structural and functional characterization of DsbC, a protein involved in disulfide bond formation in Escherichia coli.</title>
        <authorList>
            <person name="Zapun A."/>
            <person name="Missiakas D."/>
            <person name="Raina S."/>
            <person name="Creighton T.E."/>
        </authorList>
    </citation>
    <scope>CHARACTERIZATION</scope>
    <scope>MUTAGENESIS</scope>
    <scope>SEQUENCE REVISION TO 219</scope>
</reference>
<reference key="7">
    <citation type="journal article" date="1994" name="EMBO J.">
        <title>Characterization of DsbC, a periplasmic protein of Erwinia chrysanthemi and Escherichia coli with disulfide isomerase activity.</title>
        <authorList>
            <person name="Shevchik V.E."/>
            <person name="Condemine G."/>
            <person name="Robert-Baudouy J."/>
        </authorList>
    </citation>
    <scope>CHARACTERIZATION</scope>
</reference>
<reference key="8">
    <citation type="journal article" date="1997" name="Biochemistry">
        <title>In vitro and in vivo redox states of the Escherichia coli periplasmic oxidoreductases DsbA and DsbC.</title>
        <authorList>
            <person name="Joly J.C."/>
            <person name="Swartz J.R."/>
        </authorList>
    </citation>
    <scope>CHARACTERIZATION</scope>
</reference>
<reference key="9">
    <citation type="journal article" date="2009" name="Science">
        <title>A periplasmic reducing system protects single cysteine residues from oxidation.</title>
        <authorList>
            <person name="Depuydt M."/>
            <person name="Leonard S.E."/>
            <person name="Vertommen D."/>
            <person name="Denoncin K."/>
            <person name="Morsomme P."/>
            <person name="Wahni K."/>
            <person name="Messens J."/>
            <person name="Carroll K.S."/>
            <person name="Collet J.F."/>
        </authorList>
    </citation>
    <scope>FUNCTION</scope>
    <source>
        <strain>K12 / MC1000 / ATCC 39531</strain>
    </source>
</reference>
<reference key="10">
    <citation type="journal article" date="2000" name="Nat. Struct. Biol.">
        <title>Crystal structure of the protein disulfide bond isomerase, DsbC, from Escherichia coli.</title>
        <authorList>
            <person name="McCarthy A.A."/>
            <person name="Haebel P.W."/>
            <person name="Torronen A."/>
            <person name="Rybin V."/>
            <person name="Baker E.N."/>
            <person name="Metcalf P."/>
        </authorList>
    </citation>
    <scope>X-RAY CRYSTALLOGRAPHY (1.9 ANGSTROMS)</scope>
    <scope>DISULFIDE BONDS</scope>
</reference>